<reference key="1">
    <citation type="journal article" date="2003" name="Proc. Natl. Acad. Sci. U.S.A.">
        <title>Complete genome sequence of Lactobacillus plantarum WCFS1.</title>
        <authorList>
            <person name="Kleerebezem M."/>
            <person name="Boekhorst J."/>
            <person name="van Kranenburg R."/>
            <person name="Molenaar D."/>
            <person name="Kuipers O.P."/>
            <person name="Leer R."/>
            <person name="Tarchini R."/>
            <person name="Peters S.A."/>
            <person name="Sandbrink H.M."/>
            <person name="Fiers M.W.E.J."/>
            <person name="Stiekema W."/>
            <person name="Klein Lankhorst R.M."/>
            <person name="Bron P.A."/>
            <person name="Hoffer S.M."/>
            <person name="Nierop Groot M.N."/>
            <person name="Kerkhoven R."/>
            <person name="De Vries M."/>
            <person name="Ursing B."/>
            <person name="De Vos W.M."/>
            <person name="Siezen R.J."/>
        </authorList>
    </citation>
    <scope>NUCLEOTIDE SEQUENCE [LARGE SCALE GENOMIC DNA]</scope>
    <source>
        <strain>ATCC BAA-793 / NCIMB 8826 / WCFS1</strain>
    </source>
</reference>
<reference key="2">
    <citation type="journal article" date="2012" name="J. Bacteriol.">
        <title>Complete resequencing and reannotation of the Lactobacillus plantarum WCFS1 genome.</title>
        <authorList>
            <person name="Siezen R.J."/>
            <person name="Francke C."/>
            <person name="Renckens B."/>
            <person name="Boekhorst J."/>
            <person name="Wels M."/>
            <person name="Kleerebezem M."/>
            <person name="van Hijum S.A."/>
        </authorList>
    </citation>
    <scope>NUCLEOTIDE SEQUENCE [LARGE SCALE GENOMIC DNA]</scope>
    <scope>GENOME REANNOTATION</scope>
    <source>
        <strain>ATCC BAA-793 / NCIMB 8826 / WCFS1</strain>
    </source>
</reference>
<organism>
    <name type="scientific">Lactiplantibacillus plantarum (strain ATCC BAA-793 / NCIMB 8826 / WCFS1)</name>
    <name type="common">Lactobacillus plantarum</name>
    <dbReference type="NCBI Taxonomy" id="220668"/>
    <lineage>
        <taxon>Bacteria</taxon>
        <taxon>Bacillati</taxon>
        <taxon>Bacillota</taxon>
        <taxon>Bacilli</taxon>
        <taxon>Lactobacillales</taxon>
        <taxon>Lactobacillaceae</taxon>
        <taxon>Lactiplantibacillus</taxon>
    </lineage>
</organism>
<accession>Q88W97</accession>
<accession>F9UPA6</accession>
<proteinExistence type="inferred from homology"/>
<sequence length="207" mass="23754">MTIRYPNGQVYRQPGPTKSKSSKFANVNFGDRGMSLEQEINDSNAYYLENNIAVIHKKPTPIQIVKVDYPKRSAAVIREAYFKQASTTDYNGVYRGKYLDFEAKETKNKTAFPLKNFHEHQIKHMRQCLAQSGICFVIIRFASLGRLFLLTASDLFTYWDHQGDGGRKSIPLTDIEHLAAELHYQINPRIPYLDALDHIIDETSSIH</sequence>
<feature type="chain" id="PRO_0000212298" description="Holliday junction resolvase RecU">
    <location>
        <begin position="1"/>
        <end position="207"/>
    </location>
</feature>
<feature type="region of interest" description="Disordered" evidence="2">
    <location>
        <begin position="1"/>
        <end position="21"/>
    </location>
</feature>
<feature type="binding site" evidence="1">
    <location>
        <position position="87"/>
    </location>
    <ligand>
        <name>Mg(2+)</name>
        <dbReference type="ChEBI" id="CHEBI:18420"/>
    </ligand>
</feature>
<feature type="binding site" evidence="1">
    <location>
        <position position="89"/>
    </location>
    <ligand>
        <name>Mg(2+)</name>
        <dbReference type="ChEBI" id="CHEBI:18420"/>
    </ligand>
</feature>
<feature type="binding site" evidence="1">
    <location>
        <position position="102"/>
    </location>
    <ligand>
        <name>Mg(2+)</name>
        <dbReference type="ChEBI" id="CHEBI:18420"/>
    </ligand>
</feature>
<feature type="binding site" evidence="1">
    <location>
        <position position="121"/>
    </location>
    <ligand>
        <name>Mg(2+)</name>
        <dbReference type="ChEBI" id="CHEBI:18420"/>
    </ligand>
</feature>
<feature type="site" description="Transition state stabilizer" evidence="1">
    <location>
        <position position="104"/>
    </location>
</feature>
<evidence type="ECO:0000255" key="1">
    <source>
        <dbReference type="HAMAP-Rule" id="MF_00130"/>
    </source>
</evidence>
<evidence type="ECO:0000256" key="2">
    <source>
        <dbReference type="SAM" id="MobiDB-lite"/>
    </source>
</evidence>
<gene>
    <name evidence="1" type="primary">recU</name>
    <name type="ordered locus">lp_1752</name>
</gene>
<dbReference type="EC" id="3.1.21.10" evidence="1"/>
<dbReference type="EMBL" id="AL935263">
    <property type="protein sequence ID" value="CCC79045.1"/>
    <property type="molecule type" value="Genomic_DNA"/>
</dbReference>
<dbReference type="RefSeq" id="WP_003644374.1">
    <property type="nucleotide sequence ID" value="NC_004567.2"/>
</dbReference>
<dbReference type="RefSeq" id="YP_004889559.1">
    <property type="nucleotide sequence ID" value="NC_004567.2"/>
</dbReference>
<dbReference type="SMR" id="Q88W97"/>
<dbReference type="STRING" id="220668.lp_1752"/>
<dbReference type="EnsemblBacteria" id="CCC79045">
    <property type="protein sequence ID" value="CCC79045"/>
    <property type="gene ID" value="lp_1752"/>
</dbReference>
<dbReference type="GeneID" id="77218143"/>
<dbReference type="KEGG" id="lpl:lp_1752"/>
<dbReference type="PATRIC" id="fig|220668.9.peg.1478"/>
<dbReference type="eggNOG" id="COG3331">
    <property type="taxonomic scope" value="Bacteria"/>
</dbReference>
<dbReference type="HOGENOM" id="CLU_096340_0_0_9"/>
<dbReference type="OrthoDB" id="9783592at2"/>
<dbReference type="PhylomeDB" id="Q88W97"/>
<dbReference type="Proteomes" id="UP000000432">
    <property type="component" value="Chromosome"/>
</dbReference>
<dbReference type="GO" id="GO:0005737">
    <property type="term" value="C:cytoplasm"/>
    <property type="evidence" value="ECO:0007669"/>
    <property type="project" value="UniProtKB-SubCell"/>
</dbReference>
<dbReference type="GO" id="GO:0004519">
    <property type="term" value="F:endonuclease activity"/>
    <property type="evidence" value="ECO:0007669"/>
    <property type="project" value="UniProtKB-UniRule"/>
</dbReference>
<dbReference type="GO" id="GO:0000287">
    <property type="term" value="F:magnesium ion binding"/>
    <property type="evidence" value="ECO:0007669"/>
    <property type="project" value="UniProtKB-UniRule"/>
</dbReference>
<dbReference type="GO" id="GO:0003676">
    <property type="term" value="F:nucleic acid binding"/>
    <property type="evidence" value="ECO:0007669"/>
    <property type="project" value="InterPro"/>
</dbReference>
<dbReference type="GO" id="GO:0007059">
    <property type="term" value="P:chromosome segregation"/>
    <property type="evidence" value="ECO:0007669"/>
    <property type="project" value="UniProtKB-UniRule"/>
</dbReference>
<dbReference type="GO" id="GO:0006310">
    <property type="term" value="P:DNA recombination"/>
    <property type="evidence" value="ECO:0007669"/>
    <property type="project" value="UniProtKB-UniRule"/>
</dbReference>
<dbReference type="GO" id="GO:0006281">
    <property type="term" value="P:DNA repair"/>
    <property type="evidence" value="ECO:0007669"/>
    <property type="project" value="UniProtKB-UniRule"/>
</dbReference>
<dbReference type="CDD" id="cd22354">
    <property type="entry name" value="RecU-like"/>
    <property type="match status" value="1"/>
</dbReference>
<dbReference type="Gene3D" id="3.40.1350.10">
    <property type="match status" value="1"/>
</dbReference>
<dbReference type="HAMAP" id="MF_00130">
    <property type="entry name" value="RecU"/>
    <property type="match status" value="1"/>
</dbReference>
<dbReference type="InterPro" id="IPR004612">
    <property type="entry name" value="Resolv_RecU"/>
</dbReference>
<dbReference type="InterPro" id="IPR011335">
    <property type="entry name" value="Restrct_endonuc-II-like"/>
</dbReference>
<dbReference type="InterPro" id="IPR011856">
    <property type="entry name" value="tRNA_endonuc-like_dom_sf"/>
</dbReference>
<dbReference type="NCBIfam" id="NF002584">
    <property type="entry name" value="PRK02234.1-5"/>
    <property type="match status" value="1"/>
</dbReference>
<dbReference type="NCBIfam" id="TIGR00648">
    <property type="entry name" value="recU"/>
    <property type="match status" value="1"/>
</dbReference>
<dbReference type="Pfam" id="PF03838">
    <property type="entry name" value="RecU"/>
    <property type="match status" value="1"/>
</dbReference>
<dbReference type="PIRSF" id="PIRSF037785">
    <property type="entry name" value="RecU"/>
    <property type="match status" value="1"/>
</dbReference>
<dbReference type="SUPFAM" id="SSF52980">
    <property type="entry name" value="Restriction endonuclease-like"/>
    <property type="match status" value="1"/>
</dbReference>
<comment type="function">
    <text evidence="1">Endonuclease that resolves Holliday junction intermediates in genetic recombination. Cleaves mobile four-strand junctions by introducing symmetrical nicks in paired strands. Promotes annealing of linear ssDNA with homologous dsDNA. Required for DNA repair, homologous recombination and chromosome segregation.</text>
</comment>
<comment type="catalytic activity">
    <reaction evidence="1">
        <text>Endonucleolytic cleavage at a junction such as a reciprocal single-stranded crossover between two homologous DNA duplexes (Holliday junction).</text>
        <dbReference type="EC" id="3.1.21.10"/>
    </reaction>
</comment>
<comment type="cofactor">
    <cofactor evidence="1">
        <name>Mg(2+)</name>
        <dbReference type="ChEBI" id="CHEBI:18420"/>
    </cofactor>
    <text evidence="1">Binds 1 Mg(2+) ion per subunit.</text>
</comment>
<comment type="subcellular location">
    <subcellularLocation>
        <location evidence="1">Cytoplasm</location>
    </subcellularLocation>
</comment>
<comment type="similarity">
    <text evidence="1">Belongs to the RecU family.</text>
</comment>
<name>RECU_LACPL</name>
<protein>
    <recommendedName>
        <fullName evidence="1">Holliday junction resolvase RecU</fullName>
        <ecNumber evidence="1">3.1.21.10</ecNumber>
    </recommendedName>
    <alternativeName>
        <fullName evidence="1">Recombination protein U homolog</fullName>
    </alternativeName>
</protein>
<keyword id="KW-0963">Cytoplasm</keyword>
<keyword id="KW-0227">DNA damage</keyword>
<keyword id="KW-0233">DNA recombination</keyword>
<keyword id="KW-0234">DNA repair</keyword>
<keyword id="KW-0255">Endonuclease</keyword>
<keyword id="KW-0378">Hydrolase</keyword>
<keyword id="KW-0460">Magnesium</keyword>
<keyword id="KW-0479">Metal-binding</keyword>
<keyword id="KW-0540">Nuclease</keyword>
<keyword id="KW-1185">Reference proteome</keyword>